<dbReference type="EC" id="3.1.3.4" evidence="5"/>
<dbReference type="EMBL" id="AF286723">
    <property type="protein sequence ID" value="AAG52761.1"/>
    <property type="molecule type" value="mRNA"/>
</dbReference>
<dbReference type="EMBL" id="AK033662">
    <property type="protein sequence ID" value="BAC28415.1"/>
    <property type="molecule type" value="mRNA"/>
</dbReference>
<dbReference type="EMBL" id="AK050138">
    <property type="protein sequence ID" value="BAC34088.1"/>
    <property type="molecule type" value="mRNA"/>
</dbReference>
<dbReference type="EMBL" id="AK086834">
    <property type="protein sequence ID" value="BAC39754.1"/>
    <property type="molecule type" value="mRNA"/>
</dbReference>
<dbReference type="EMBL" id="BC039698">
    <property type="protein sequence ID" value="AAH39698.1"/>
    <property type="molecule type" value="mRNA"/>
</dbReference>
<dbReference type="CCDS" id="CCDS28956.1">
    <molecule id="Q99PI5-1"/>
</dbReference>
<dbReference type="RefSeq" id="NP_001344720.1">
    <molecule id="Q99PI5-1"/>
    <property type="nucleotide sequence ID" value="NM_001357791.1"/>
</dbReference>
<dbReference type="RefSeq" id="NP_075020.2">
    <molecule id="Q99PI5-1"/>
    <property type="nucleotide sequence ID" value="NM_022882.4"/>
</dbReference>
<dbReference type="RefSeq" id="XP_006524850.1">
    <property type="nucleotide sequence ID" value="XM_006524787.3"/>
</dbReference>
<dbReference type="RefSeq" id="XP_006524851.1">
    <molecule id="Q99PI5-1"/>
    <property type="nucleotide sequence ID" value="XM_006524788.4"/>
</dbReference>
<dbReference type="PDB" id="7KIQ">
    <property type="method" value="X-ray"/>
    <property type="resolution" value="2.52 A"/>
    <property type="chains" value="A/B/C/D/E/F/G/H/I/J=459-549"/>
</dbReference>
<dbReference type="PDBsum" id="7KIQ"/>
<dbReference type="SMR" id="Q99PI5"/>
<dbReference type="BioGRID" id="211110">
    <property type="interactions" value="4"/>
</dbReference>
<dbReference type="FunCoup" id="Q99PI5">
    <property type="interactions" value="2972"/>
</dbReference>
<dbReference type="STRING" id="10090.ENSMUSP00000118610"/>
<dbReference type="SwissLipids" id="SLP:000000602"/>
<dbReference type="GlyGen" id="Q99PI5">
    <property type="glycosylation" value="1 site"/>
</dbReference>
<dbReference type="iPTMnet" id="Q99PI5"/>
<dbReference type="PhosphoSitePlus" id="Q99PI5"/>
<dbReference type="SwissPalm" id="Q99PI5"/>
<dbReference type="jPOST" id="Q99PI5"/>
<dbReference type="PaxDb" id="10090-ENSMUSP00000118610"/>
<dbReference type="ProteomicsDB" id="291962">
    <molecule id="Q99PI5-1"/>
</dbReference>
<dbReference type="ProteomicsDB" id="291963">
    <molecule id="Q99PI5-2"/>
</dbReference>
<dbReference type="Pumba" id="Q99PI5"/>
<dbReference type="Antibodypedia" id="2826">
    <property type="antibodies" value="195 antibodies from 33 providers"/>
</dbReference>
<dbReference type="DNASU" id="64898"/>
<dbReference type="Ensembl" id="ENSMUST00000129635.8">
    <molecule id="Q99PI5-1"/>
    <property type="protein sequence ID" value="ENSMUSP00000119282.2"/>
    <property type="gene ID" value="ENSMUSG00000024052.18"/>
</dbReference>
<dbReference type="Ensembl" id="ENSMUST00000156570.8">
    <molecule id="Q99PI5-2"/>
    <property type="protein sequence ID" value="ENSMUSP00000120634.2"/>
    <property type="gene ID" value="ENSMUSG00000024052.18"/>
</dbReference>
<dbReference type="GeneID" id="64898"/>
<dbReference type="KEGG" id="mmu:64898"/>
<dbReference type="UCSC" id="uc008dmc.1">
    <molecule id="Q99PI5-2"/>
    <property type="organism name" value="mouse"/>
</dbReference>
<dbReference type="UCSC" id="uc012awp.1">
    <molecule id="Q99PI5-1"/>
    <property type="organism name" value="mouse"/>
</dbReference>
<dbReference type="AGR" id="MGI:1891341"/>
<dbReference type="CTD" id="9663"/>
<dbReference type="MGI" id="MGI:1891341">
    <property type="gene designation" value="Lpin2"/>
</dbReference>
<dbReference type="VEuPathDB" id="HostDB:ENSMUSG00000024052"/>
<dbReference type="eggNOG" id="KOG2116">
    <property type="taxonomic scope" value="Eukaryota"/>
</dbReference>
<dbReference type="GeneTree" id="ENSGT00940000156313"/>
<dbReference type="HOGENOM" id="CLU_595744_0_0_1"/>
<dbReference type="InParanoid" id="Q99PI5"/>
<dbReference type="OMA" id="NFCTEHI"/>
<dbReference type="OrthoDB" id="4567at2759"/>
<dbReference type="Reactome" id="R-MMU-1483191">
    <property type="pathway name" value="Synthesis of PC"/>
</dbReference>
<dbReference type="Reactome" id="R-MMU-1483213">
    <property type="pathway name" value="Synthesis of PE"/>
</dbReference>
<dbReference type="Reactome" id="R-MMU-4419969">
    <property type="pathway name" value="Depolymerization of the Nuclear Lamina"/>
</dbReference>
<dbReference type="Reactome" id="R-MMU-75109">
    <property type="pathway name" value="Triglyceride biosynthesis"/>
</dbReference>
<dbReference type="BioGRID-ORCS" id="64898">
    <property type="hits" value="0 hits in 78 CRISPR screens"/>
</dbReference>
<dbReference type="ChiTaRS" id="Lpin2">
    <property type="organism name" value="mouse"/>
</dbReference>
<dbReference type="PRO" id="PR:Q99PI5"/>
<dbReference type="Proteomes" id="UP000000589">
    <property type="component" value="Chromosome 17"/>
</dbReference>
<dbReference type="RNAct" id="Q99PI5">
    <property type="molecule type" value="protein"/>
</dbReference>
<dbReference type="Bgee" id="ENSMUSG00000024052">
    <property type="expression patterns" value="Expressed in renal corpuscle and 256 other cell types or tissues"/>
</dbReference>
<dbReference type="ExpressionAtlas" id="Q99PI5">
    <property type="expression patterns" value="baseline and differential"/>
</dbReference>
<dbReference type="GO" id="GO:0005829">
    <property type="term" value="C:cytosol"/>
    <property type="evidence" value="ECO:0000314"/>
    <property type="project" value="UniProtKB"/>
</dbReference>
<dbReference type="GO" id="GO:0005789">
    <property type="term" value="C:endoplasmic reticulum membrane"/>
    <property type="evidence" value="ECO:0000314"/>
    <property type="project" value="UniProtKB"/>
</dbReference>
<dbReference type="GO" id="GO:0005634">
    <property type="term" value="C:nucleus"/>
    <property type="evidence" value="ECO:0007669"/>
    <property type="project" value="UniProtKB-SubCell"/>
</dbReference>
<dbReference type="GO" id="GO:0008195">
    <property type="term" value="F:phosphatidate phosphatase activity"/>
    <property type="evidence" value="ECO:0000314"/>
    <property type="project" value="UniProtKB"/>
</dbReference>
<dbReference type="GO" id="GO:0003713">
    <property type="term" value="F:transcription coactivator activity"/>
    <property type="evidence" value="ECO:0000314"/>
    <property type="project" value="UniProtKB"/>
</dbReference>
<dbReference type="GO" id="GO:0006631">
    <property type="term" value="P:fatty acid metabolic process"/>
    <property type="evidence" value="ECO:0007669"/>
    <property type="project" value="UniProtKB-KW"/>
</dbReference>
<dbReference type="GO" id="GO:0006629">
    <property type="term" value="P:lipid metabolic process"/>
    <property type="evidence" value="ECO:0000314"/>
    <property type="project" value="UniProtKB"/>
</dbReference>
<dbReference type="GO" id="GO:0045944">
    <property type="term" value="P:positive regulation of transcription by RNA polymerase II"/>
    <property type="evidence" value="ECO:0000314"/>
    <property type="project" value="UniProtKB"/>
</dbReference>
<dbReference type="GO" id="GO:0019432">
    <property type="term" value="P:triglyceride biosynthetic process"/>
    <property type="evidence" value="ECO:0000315"/>
    <property type="project" value="MGI"/>
</dbReference>
<dbReference type="InterPro" id="IPR036412">
    <property type="entry name" value="HAD-like_sf"/>
</dbReference>
<dbReference type="InterPro" id="IPR026058">
    <property type="entry name" value="LIPIN"/>
</dbReference>
<dbReference type="InterPro" id="IPR031703">
    <property type="entry name" value="Lipin_mid"/>
</dbReference>
<dbReference type="InterPro" id="IPR007651">
    <property type="entry name" value="Lipin_N"/>
</dbReference>
<dbReference type="InterPro" id="IPR013209">
    <property type="entry name" value="LNS2"/>
</dbReference>
<dbReference type="InterPro" id="IPR031315">
    <property type="entry name" value="LNS2/PITP"/>
</dbReference>
<dbReference type="PANTHER" id="PTHR12181">
    <property type="entry name" value="LIPIN"/>
    <property type="match status" value="1"/>
</dbReference>
<dbReference type="PANTHER" id="PTHR12181:SF11">
    <property type="entry name" value="PHOSPHATIDATE PHOSPHATASE LPIN2"/>
    <property type="match status" value="1"/>
</dbReference>
<dbReference type="Pfam" id="PF16876">
    <property type="entry name" value="Lipin_mid"/>
    <property type="match status" value="1"/>
</dbReference>
<dbReference type="Pfam" id="PF04571">
    <property type="entry name" value="Lipin_N"/>
    <property type="match status" value="1"/>
</dbReference>
<dbReference type="Pfam" id="PF08235">
    <property type="entry name" value="LNS2"/>
    <property type="match status" value="1"/>
</dbReference>
<dbReference type="SMART" id="SM00775">
    <property type="entry name" value="LNS2"/>
    <property type="match status" value="1"/>
</dbReference>
<dbReference type="SUPFAM" id="SSF56784">
    <property type="entry name" value="HAD-like"/>
    <property type="match status" value="1"/>
</dbReference>
<reference key="1">
    <citation type="journal article" date="2001" name="Nat. Genet.">
        <title>Lipodystrophy in the fld mouse results from mutation of a new gene encoding a nuclear protein, lipin.</title>
        <authorList>
            <person name="Peterfy M."/>
            <person name="Phan J."/>
            <person name="Xu P."/>
            <person name="Reue K."/>
        </authorList>
    </citation>
    <scope>NUCLEOTIDE SEQUENCE [MRNA] (ISOFORM 1)</scope>
</reference>
<reference key="2">
    <citation type="journal article" date="2005" name="Science">
        <title>The transcriptional landscape of the mammalian genome.</title>
        <authorList>
            <person name="Carninci P."/>
            <person name="Kasukawa T."/>
            <person name="Katayama S."/>
            <person name="Gough J."/>
            <person name="Frith M.C."/>
            <person name="Maeda N."/>
            <person name="Oyama R."/>
            <person name="Ravasi T."/>
            <person name="Lenhard B."/>
            <person name="Wells C."/>
            <person name="Kodzius R."/>
            <person name="Shimokawa K."/>
            <person name="Bajic V.B."/>
            <person name="Brenner S.E."/>
            <person name="Batalov S."/>
            <person name="Forrest A.R."/>
            <person name="Zavolan M."/>
            <person name="Davis M.J."/>
            <person name="Wilming L.G."/>
            <person name="Aidinis V."/>
            <person name="Allen J.E."/>
            <person name="Ambesi-Impiombato A."/>
            <person name="Apweiler R."/>
            <person name="Aturaliya R.N."/>
            <person name="Bailey T.L."/>
            <person name="Bansal M."/>
            <person name="Baxter L."/>
            <person name="Beisel K.W."/>
            <person name="Bersano T."/>
            <person name="Bono H."/>
            <person name="Chalk A.M."/>
            <person name="Chiu K.P."/>
            <person name="Choudhary V."/>
            <person name="Christoffels A."/>
            <person name="Clutterbuck D.R."/>
            <person name="Crowe M.L."/>
            <person name="Dalla E."/>
            <person name="Dalrymple B.P."/>
            <person name="de Bono B."/>
            <person name="Della Gatta G."/>
            <person name="di Bernardo D."/>
            <person name="Down T."/>
            <person name="Engstrom P."/>
            <person name="Fagiolini M."/>
            <person name="Faulkner G."/>
            <person name="Fletcher C.F."/>
            <person name="Fukushima T."/>
            <person name="Furuno M."/>
            <person name="Futaki S."/>
            <person name="Gariboldi M."/>
            <person name="Georgii-Hemming P."/>
            <person name="Gingeras T.R."/>
            <person name="Gojobori T."/>
            <person name="Green R.E."/>
            <person name="Gustincich S."/>
            <person name="Harbers M."/>
            <person name="Hayashi Y."/>
            <person name="Hensch T.K."/>
            <person name="Hirokawa N."/>
            <person name="Hill D."/>
            <person name="Huminiecki L."/>
            <person name="Iacono M."/>
            <person name="Ikeo K."/>
            <person name="Iwama A."/>
            <person name="Ishikawa T."/>
            <person name="Jakt M."/>
            <person name="Kanapin A."/>
            <person name="Katoh M."/>
            <person name="Kawasawa Y."/>
            <person name="Kelso J."/>
            <person name="Kitamura H."/>
            <person name="Kitano H."/>
            <person name="Kollias G."/>
            <person name="Krishnan S.P."/>
            <person name="Kruger A."/>
            <person name="Kummerfeld S.K."/>
            <person name="Kurochkin I.V."/>
            <person name="Lareau L.F."/>
            <person name="Lazarevic D."/>
            <person name="Lipovich L."/>
            <person name="Liu J."/>
            <person name="Liuni S."/>
            <person name="McWilliam S."/>
            <person name="Madan Babu M."/>
            <person name="Madera M."/>
            <person name="Marchionni L."/>
            <person name="Matsuda H."/>
            <person name="Matsuzawa S."/>
            <person name="Miki H."/>
            <person name="Mignone F."/>
            <person name="Miyake S."/>
            <person name="Morris K."/>
            <person name="Mottagui-Tabar S."/>
            <person name="Mulder N."/>
            <person name="Nakano N."/>
            <person name="Nakauchi H."/>
            <person name="Ng P."/>
            <person name="Nilsson R."/>
            <person name="Nishiguchi S."/>
            <person name="Nishikawa S."/>
            <person name="Nori F."/>
            <person name="Ohara O."/>
            <person name="Okazaki Y."/>
            <person name="Orlando V."/>
            <person name="Pang K.C."/>
            <person name="Pavan W.J."/>
            <person name="Pavesi G."/>
            <person name="Pesole G."/>
            <person name="Petrovsky N."/>
            <person name="Piazza S."/>
            <person name="Reed J."/>
            <person name="Reid J.F."/>
            <person name="Ring B.Z."/>
            <person name="Ringwald M."/>
            <person name="Rost B."/>
            <person name="Ruan Y."/>
            <person name="Salzberg S.L."/>
            <person name="Sandelin A."/>
            <person name="Schneider C."/>
            <person name="Schoenbach C."/>
            <person name="Sekiguchi K."/>
            <person name="Semple C.A."/>
            <person name="Seno S."/>
            <person name="Sessa L."/>
            <person name="Sheng Y."/>
            <person name="Shibata Y."/>
            <person name="Shimada H."/>
            <person name="Shimada K."/>
            <person name="Silva D."/>
            <person name="Sinclair B."/>
            <person name="Sperling S."/>
            <person name="Stupka E."/>
            <person name="Sugiura K."/>
            <person name="Sultana R."/>
            <person name="Takenaka Y."/>
            <person name="Taki K."/>
            <person name="Tammoja K."/>
            <person name="Tan S.L."/>
            <person name="Tang S."/>
            <person name="Taylor M.S."/>
            <person name="Tegner J."/>
            <person name="Teichmann S.A."/>
            <person name="Ueda H.R."/>
            <person name="van Nimwegen E."/>
            <person name="Verardo R."/>
            <person name="Wei C.L."/>
            <person name="Yagi K."/>
            <person name="Yamanishi H."/>
            <person name="Zabarovsky E."/>
            <person name="Zhu S."/>
            <person name="Zimmer A."/>
            <person name="Hide W."/>
            <person name="Bult C."/>
            <person name="Grimmond S.M."/>
            <person name="Teasdale R.D."/>
            <person name="Liu E.T."/>
            <person name="Brusic V."/>
            <person name="Quackenbush J."/>
            <person name="Wahlestedt C."/>
            <person name="Mattick J.S."/>
            <person name="Hume D.A."/>
            <person name="Kai C."/>
            <person name="Sasaki D."/>
            <person name="Tomaru Y."/>
            <person name="Fukuda S."/>
            <person name="Kanamori-Katayama M."/>
            <person name="Suzuki M."/>
            <person name="Aoki J."/>
            <person name="Arakawa T."/>
            <person name="Iida J."/>
            <person name="Imamura K."/>
            <person name="Itoh M."/>
            <person name="Kato T."/>
            <person name="Kawaji H."/>
            <person name="Kawagashira N."/>
            <person name="Kawashima T."/>
            <person name="Kojima M."/>
            <person name="Kondo S."/>
            <person name="Konno H."/>
            <person name="Nakano K."/>
            <person name="Ninomiya N."/>
            <person name="Nishio T."/>
            <person name="Okada M."/>
            <person name="Plessy C."/>
            <person name="Shibata K."/>
            <person name="Shiraki T."/>
            <person name="Suzuki S."/>
            <person name="Tagami M."/>
            <person name="Waki K."/>
            <person name="Watahiki A."/>
            <person name="Okamura-Oho Y."/>
            <person name="Suzuki H."/>
            <person name="Kawai J."/>
            <person name="Hayashizaki Y."/>
        </authorList>
    </citation>
    <scope>NUCLEOTIDE SEQUENCE [LARGE SCALE MRNA] (ISOFORM 2)</scope>
    <scope>NUCLEOTIDE SEQUENCE [LARGE SCALE MRNA] OF 1-276 AND 659-893 (ISOFORM 1)</scope>
    <source>
        <strain>C57BL/6J</strain>
        <tissue>Cecum</tissue>
        <tissue>Liver</tissue>
    </source>
</reference>
<reference key="3">
    <citation type="journal article" date="2004" name="Genome Res.">
        <title>The status, quality, and expansion of the NIH full-length cDNA project: the Mammalian Gene Collection (MGC).</title>
        <authorList>
            <consortium name="The MGC Project Team"/>
        </authorList>
    </citation>
    <scope>NUCLEOTIDE SEQUENCE [LARGE SCALE MRNA] (ISOFORM 1)</scope>
    <source>
        <strain>FVB/N</strain>
        <tissue>Liver</tissue>
    </source>
</reference>
<reference key="4">
    <citation type="journal article" date="2007" name="J. Biol. Chem.">
        <title>Three mammalian lipins act as phosphatidate phosphatases with distinct tissue expression patterns.</title>
        <authorList>
            <person name="Donkor J."/>
            <person name="Sariahmetoglu M."/>
            <person name="Dewald J."/>
            <person name="Brindley D.N."/>
            <person name="Reue K."/>
        </authorList>
    </citation>
    <scope>TISSUE SPECIFICITY</scope>
    <scope>CATALYTIC ACTIVITY</scope>
    <scope>COFACTOR</scope>
    <scope>ACTIVITY REGULATION</scope>
    <scope>FUNCTION</scope>
</reference>
<reference key="5">
    <citation type="journal article" date="2007" name="Proc. Natl. Acad. Sci. U.S.A.">
        <title>Large-scale phosphorylation analysis of mouse liver.</title>
        <authorList>
            <person name="Villen J."/>
            <person name="Beausoleil S.A."/>
            <person name="Gerber S.A."/>
            <person name="Gygi S.P."/>
        </authorList>
    </citation>
    <scope>PHOSPHORYLATION [LARGE SCALE ANALYSIS] AT SER-186 AND SER-187</scope>
    <scope>IDENTIFICATION BY MASS SPECTROMETRY [LARGE SCALE ANALYSIS]</scope>
    <source>
        <tissue>Liver</tissue>
    </source>
</reference>
<reference key="6">
    <citation type="journal article" date="2009" name="J. Biol. Chem.">
        <title>Lipin 2 is a liver-enriched phosphatidate phosphohydrolase enzyme that is dynamically regulated by fasting and obesity in mice.</title>
        <authorList>
            <person name="Gropler M.C."/>
            <person name="Harris T.E."/>
            <person name="Hall A.M."/>
            <person name="Wolins N.E."/>
            <person name="Gross R.W."/>
            <person name="Han X."/>
            <person name="Chen Z."/>
            <person name="Finck B.N."/>
        </authorList>
    </citation>
    <scope>SUBCELLULAR LOCATION</scope>
    <scope>FUNCTION</scope>
    <scope>PHOSPHORYLATION AT SER-106</scope>
    <scope>INDUCTION</scope>
</reference>
<reference key="7">
    <citation type="journal article" date="2009" name="J. Biol. Chem.">
        <title>A conserved serine residue is required for the phosphatidate phosphatase activity but not the transcriptional coactivator functions of lipin-1 and lipin-2.</title>
        <authorList>
            <person name="Donkor J."/>
            <person name="Zhang P."/>
            <person name="Wong S."/>
            <person name="O'Loughlin L."/>
            <person name="Dewald J."/>
            <person name="Kok B.P."/>
            <person name="Brindley D.N."/>
            <person name="Reue K."/>
        </authorList>
    </citation>
    <scope>SUBCELLULAR LOCATION</scope>
    <scope>FUNCTION</scope>
    <scope>TISSUE SPECIFICITY</scope>
    <scope>INDUCTION</scope>
    <scope>MUTAGENESIS OF SER-731</scope>
</reference>
<reference key="8">
    <citation type="journal article" date="2010" name="Cell">
        <title>A tissue-specific atlas of mouse protein phosphorylation and expression.</title>
        <authorList>
            <person name="Huttlin E.L."/>
            <person name="Jedrychowski M.P."/>
            <person name="Elias J.E."/>
            <person name="Goswami T."/>
            <person name="Rad R."/>
            <person name="Beausoleil S.A."/>
            <person name="Villen J."/>
            <person name="Haas W."/>
            <person name="Sowa M.E."/>
            <person name="Gygi S.P."/>
        </authorList>
    </citation>
    <scope>PHOSPHORYLATION [LARGE SCALE ANALYSIS] AT SER-174; SER-186 AND SER-187</scope>
    <scope>IDENTIFICATION BY MASS SPECTROMETRY [LARGE SCALE ANALYSIS]</scope>
    <source>
        <tissue>Brain</tissue>
        <tissue>Kidney</tissue>
        <tissue>Liver</tissue>
        <tissue>Lung</tissue>
        <tissue>Spleen</tissue>
        <tissue>Testis</tissue>
    </source>
</reference>
<sequence>MNYVGQLAGQVLVTVKELYKGINQATLSGCIDVVVVRQQDGSYQCSPFHVRFGKLGVLRSKEKVIDIEINGSAVDLHMKLGDNGEAFFVEETEEEYEKLPAYLATSPIPTEDQFFKHIETPLVKSSGNERPAQSSDVSHTLESEAVFTQSSVKKKKRRRKKCKQDNRKEEQAASPVAEDVGDVGVSSDDEKRAQAARGSSNASLKEEDYKEPSLFHSGDNYPLSDGDWSPLETTYPQAVCPKSDSELEVKPSESLLRSEPHMEWTWGGFPESTKVTKRERYDYHPRTATITPSENTHFRVIPSEDSLIREVEKDATVEDTTCTIVKPKPRALCKQLSDAASTELPESPLEAPQISSLLDADPVPSPSAEAPSEPKPAAKDSPTKKKGVHKRSQHQGPDDIYLDDLKALEPEVAALYFPKSDTDPGSRQWPESDTFSGSQSPQSVGSAAADSGTECLSDSAMDLPDVTLSLCGGLSENGEISKEKFMEHIITYHEFAENPGLIDNPNLVIRIYNRYYNWALAAPMILSLQVFQKSLPKATVESWVKDKMPKKSGRWWFWRKKESMIKQLPETKEGKSEVPPANDLPSNAEEPTSARPAENDTSSDEGSQELEESIKVDPITVETLSHCGTASYKKSLRLSSDQIAKLKLHDGPNDVVFSITTQYQGTCRCAGTIYLWNWNDKVIISDIDGTITKSDALGQILPQLGKDWTHQGIARLYHSINENGYKFLYCSARAIGMADMTRGYLHWVNDKGTILPRGPLMLSPSSLFSAFHREVIEKKPEKFKIECLNDIKNLFAPSRQPFYAAFGNRPNDVYAYTQVGVPDCRIFTVNPKGELIQERTKGNKSSYHRLSELVEHVFPLLSKEQNSAFPCPEFSSFCYWRDPIPDLDLDDLA</sequence>
<accession>Q99PI5</accession>
<accession>Q8C357</accession>
<accession>Q8C7I8</accession>
<accession>Q8CC85</accession>
<accession>Q8CHR7</accession>
<protein>
    <recommendedName>
        <fullName evidence="10">Phosphatidate phosphatase LPIN2</fullName>
        <ecNumber evidence="5">3.1.3.4</ecNumber>
    </recommendedName>
    <alternativeName>
        <fullName evidence="9">Lipin-2</fullName>
    </alternativeName>
</protein>
<comment type="function">
    <text evidence="5 6 7">Acts as a magnesium-dependent phosphatidate phosphatase enzyme which catalyzes the conversion of phosphatidic acid to diacylglycerol during triglyceride, phosphatidylcholine and phosphatidylethanolamine biosynthesis in the endoplasmic reticulum membrane (PubMed:17158099). Plays important roles in controlling the metabolism of fatty acids at different levels. Also acts as a nuclear transcriptional coactivator for PPARGC1A to modulate lipid metabolism.</text>
</comment>
<comment type="catalytic activity">
    <reaction evidence="5">
        <text>a 1,2-diacyl-sn-glycero-3-phosphate + H2O = a 1,2-diacyl-sn-glycerol + phosphate</text>
        <dbReference type="Rhea" id="RHEA:27429"/>
        <dbReference type="ChEBI" id="CHEBI:15377"/>
        <dbReference type="ChEBI" id="CHEBI:17815"/>
        <dbReference type="ChEBI" id="CHEBI:43474"/>
        <dbReference type="ChEBI" id="CHEBI:58608"/>
        <dbReference type="EC" id="3.1.3.4"/>
    </reaction>
    <physiologicalReaction direction="left-to-right" evidence="5">
        <dbReference type="Rhea" id="RHEA:27430"/>
    </physiologicalReaction>
</comment>
<comment type="cofactor">
    <cofactor evidence="5">
        <name>Mg(2+)</name>
        <dbReference type="ChEBI" id="CHEBI:18420"/>
    </cofactor>
</comment>
<comment type="activity regulation">
    <text evidence="5">Inhibited by N-ethylmaleimide.</text>
</comment>
<comment type="subcellular location">
    <subcellularLocation>
        <location>Nucleus</location>
    </subcellularLocation>
    <subcellularLocation>
        <location>Cytoplasm</location>
        <location>Cytosol</location>
    </subcellularLocation>
    <subcellularLocation>
        <location>Endoplasmic reticulum membrane</location>
    </subcellularLocation>
    <text>Translocates from cytosol to endoplasmic reticulum membrane with increasing levels of oleate.</text>
</comment>
<comment type="alternative products">
    <event type="alternative splicing"/>
    <isoform>
        <id>Q99PI5-1</id>
        <name>1</name>
        <sequence type="displayed"/>
    </isoform>
    <isoform>
        <id>Q99PI5-2</id>
        <name>2</name>
        <sequence type="described" ref="VSP_010387 VSP_010388"/>
    </isoform>
</comment>
<comment type="tissue specificity">
    <text evidence="5 7">Expressed at high level in liver and to some extend in lung, kidney, placenta, spleen, thymus, lymph node, prostate, testes, small intestine, and colon. Expressed also in circulating red blood cells and site of lymphopoiesis.</text>
</comment>
<comment type="induction">
    <text evidence="6 7">By fasting in hepatocytes. Up-regulated in fld/fld (defect in LPIN1) mice. Up-regulated at protein level but not at transcript level in ob/ob and db/db mice, two obese mice models.</text>
</comment>
<comment type="domain">
    <text evidence="1">Contains 1 Asp-Xaa-Asp-Xaa-Thr (DXDXT) motif, a catalytic motif known to be essential for phosphatidate phosphatase activity.</text>
</comment>
<comment type="domain">
    <text evidence="1">Contains one Leu-Xaa-Xaa-Ile-Leu (LXXIL) motif, a motif known to be a transcriptional binding motif.</text>
</comment>
<comment type="similarity">
    <text evidence="10">Belongs to the lipin family.</text>
</comment>
<proteinExistence type="evidence at protein level"/>
<gene>
    <name evidence="11" type="primary">Lpin2</name>
</gene>
<evidence type="ECO:0000250" key="1"/>
<evidence type="ECO:0000250" key="2">
    <source>
        <dbReference type="UniProtKB" id="Q92539"/>
    </source>
</evidence>
<evidence type="ECO:0000255" key="3"/>
<evidence type="ECO:0000256" key="4">
    <source>
        <dbReference type="SAM" id="MobiDB-lite"/>
    </source>
</evidence>
<evidence type="ECO:0000269" key="5">
    <source>
    </source>
</evidence>
<evidence type="ECO:0000269" key="6">
    <source>
    </source>
</evidence>
<evidence type="ECO:0000269" key="7">
    <source>
    </source>
</evidence>
<evidence type="ECO:0000303" key="8">
    <source>
    </source>
</evidence>
<evidence type="ECO:0000303" key="9">
    <source>
    </source>
</evidence>
<evidence type="ECO:0000305" key="10"/>
<evidence type="ECO:0000312" key="11">
    <source>
        <dbReference type="MGI" id="MGI:1891341"/>
    </source>
</evidence>
<evidence type="ECO:0007744" key="12">
    <source>
    </source>
</evidence>
<evidence type="ECO:0007744" key="13">
    <source>
    </source>
</evidence>
<evidence type="ECO:0007829" key="14">
    <source>
        <dbReference type="PDB" id="7KIQ"/>
    </source>
</evidence>
<keyword id="KW-0002">3D-structure</keyword>
<keyword id="KW-0025">Alternative splicing</keyword>
<keyword id="KW-0963">Cytoplasm</keyword>
<keyword id="KW-0256">Endoplasmic reticulum</keyword>
<keyword id="KW-0276">Fatty acid metabolism</keyword>
<keyword id="KW-0378">Hydrolase</keyword>
<keyword id="KW-0443">Lipid metabolism</keyword>
<keyword id="KW-0472">Membrane</keyword>
<keyword id="KW-0539">Nucleus</keyword>
<keyword id="KW-0597">Phosphoprotein</keyword>
<keyword id="KW-1185">Reference proteome</keyword>
<keyword id="KW-0804">Transcription</keyword>
<keyword id="KW-0805">Transcription regulation</keyword>
<name>LPIN2_MOUSE</name>
<organism>
    <name type="scientific">Mus musculus</name>
    <name type="common">Mouse</name>
    <dbReference type="NCBI Taxonomy" id="10090"/>
    <lineage>
        <taxon>Eukaryota</taxon>
        <taxon>Metazoa</taxon>
        <taxon>Chordata</taxon>
        <taxon>Craniata</taxon>
        <taxon>Vertebrata</taxon>
        <taxon>Euteleostomi</taxon>
        <taxon>Mammalia</taxon>
        <taxon>Eutheria</taxon>
        <taxon>Euarchontoglires</taxon>
        <taxon>Glires</taxon>
        <taxon>Rodentia</taxon>
        <taxon>Myomorpha</taxon>
        <taxon>Muroidea</taxon>
        <taxon>Muridae</taxon>
        <taxon>Murinae</taxon>
        <taxon>Mus</taxon>
        <taxon>Mus</taxon>
    </lineage>
</organism>
<feature type="chain" id="PRO_0000209882" description="Phosphatidate phosphatase LPIN2">
    <location>
        <begin position="1"/>
        <end position="893"/>
    </location>
</feature>
<feature type="region of interest" description="N-LIP">
    <location>
        <begin position="1"/>
        <end position="108"/>
    </location>
</feature>
<feature type="region of interest" description="Disordered" evidence="4">
    <location>
        <begin position="122"/>
        <end position="216"/>
    </location>
</feature>
<feature type="region of interest" description="Disordered" evidence="4">
    <location>
        <begin position="357"/>
        <end position="400"/>
    </location>
</feature>
<feature type="region of interest" description="Disordered" evidence="4">
    <location>
        <begin position="417"/>
        <end position="456"/>
    </location>
</feature>
<feature type="region of interest" description="Disordered" evidence="4">
    <location>
        <begin position="568"/>
        <end position="611"/>
    </location>
</feature>
<feature type="region of interest" description="C-LIP">
    <location>
        <begin position="632"/>
        <end position="834"/>
    </location>
</feature>
<feature type="short sequence motif" description="Nuclear localization signal" evidence="3">
    <location>
        <begin position="153"/>
        <end position="158"/>
    </location>
</feature>
<feature type="short sequence motif" description="DXDXT motif">
    <location>
        <begin position="686"/>
        <end position="690"/>
    </location>
</feature>
<feature type="short sequence motif" description="LXXIL motif">
    <location>
        <begin position="697"/>
        <end position="701"/>
    </location>
</feature>
<feature type="compositionally biased region" description="Polar residues" evidence="4">
    <location>
        <begin position="123"/>
        <end position="151"/>
    </location>
</feature>
<feature type="compositionally biased region" description="Basic residues" evidence="4">
    <location>
        <begin position="152"/>
        <end position="162"/>
    </location>
</feature>
<feature type="compositionally biased region" description="Basic and acidic residues" evidence="4">
    <location>
        <begin position="204"/>
        <end position="213"/>
    </location>
</feature>
<feature type="compositionally biased region" description="Low complexity" evidence="4">
    <location>
        <begin position="360"/>
        <end position="371"/>
    </location>
</feature>
<feature type="compositionally biased region" description="Basic residues" evidence="4">
    <location>
        <begin position="384"/>
        <end position="393"/>
    </location>
</feature>
<feature type="compositionally biased region" description="Polar residues" evidence="4">
    <location>
        <begin position="423"/>
        <end position="445"/>
    </location>
</feature>
<feature type="compositionally biased region" description="Acidic residues" evidence="4">
    <location>
        <begin position="601"/>
        <end position="611"/>
    </location>
</feature>
<feature type="modified residue" description="Phosphoserine" evidence="6">
    <location>
        <position position="106"/>
    </location>
</feature>
<feature type="modified residue" description="Phosphoserine" evidence="13">
    <location>
        <position position="174"/>
    </location>
</feature>
<feature type="modified residue" description="Phosphoserine" evidence="12 13">
    <location>
        <position position="186"/>
    </location>
</feature>
<feature type="modified residue" description="Phosphoserine" evidence="12 13">
    <location>
        <position position="187"/>
    </location>
</feature>
<feature type="modified residue" description="Phosphoserine" evidence="2">
    <location>
        <position position="243"/>
    </location>
</feature>
<feature type="modified residue" description="Phosphoserine" evidence="2">
    <location>
        <position position="303"/>
    </location>
</feature>
<feature type="modified residue" description="Phosphoserine" evidence="2">
    <location>
        <position position="563"/>
    </location>
</feature>
<feature type="splice variant" id="VSP_010387" description="In isoform 2." evidence="8">
    <original>VHKRSQHQGPDDIYLDDLKALEPEVAALYFPKSDTDPGSRQWPESDTFSGSQSPQSVGSAAADSGTECLSDS</original>
    <variation>LVWLKNNCLLGDRCISGYDHGCVSRGPTWQLMTDSSARGPNALFWPLWAPGTQPYIRQNMHIPKMNRNKNTF</variation>
    <location>
        <begin position="388"/>
        <end position="459"/>
    </location>
</feature>
<feature type="splice variant" id="VSP_010388" description="In isoform 2." evidence="8">
    <location>
        <begin position="460"/>
        <end position="893"/>
    </location>
</feature>
<feature type="mutagenesis site" description="Abolishes phosphatidate phosphatase activity but does not prevent membrane association." evidence="7">
    <original>S</original>
    <variation>D</variation>
    <location>
        <position position="731"/>
    </location>
</feature>
<feature type="mutagenesis site" description="Abolishes phosphatidate phosphatase activity but does not prevent membrane association nor coactivator activity." evidence="7">
    <original>S</original>
    <variation>L</variation>
    <location>
        <position position="731"/>
    </location>
</feature>
<feature type="sequence conflict" description="In Ref. 2; BAC34088." evidence="10" ref="2">
    <original>R</original>
    <variation>S</variation>
    <location>
        <position position="839"/>
    </location>
</feature>
<feature type="strand" evidence="14">
    <location>
        <begin position="467"/>
        <end position="469"/>
    </location>
</feature>
<feature type="helix" evidence="14">
    <location>
        <begin position="482"/>
        <end position="487"/>
    </location>
</feature>
<feature type="helix" evidence="14">
    <location>
        <begin position="492"/>
        <end position="497"/>
    </location>
</feature>
<feature type="helix" evidence="14">
    <location>
        <begin position="499"/>
        <end position="503"/>
    </location>
</feature>
<feature type="strand" evidence="14">
    <location>
        <begin position="508"/>
        <end position="511"/>
    </location>
</feature>
<feature type="strand" evidence="14">
    <location>
        <begin position="514"/>
        <end position="516"/>
    </location>
</feature>
<feature type="helix" evidence="14">
    <location>
        <begin position="518"/>
        <end position="530"/>
    </location>
</feature>
<feature type="strand" evidence="14">
    <location>
        <begin position="531"/>
        <end position="533"/>
    </location>
</feature>
<feature type="helix" evidence="14">
    <location>
        <begin position="537"/>
        <end position="544"/>
    </location>
</feature>